<reference key="1">
    <citation type="journal article" date="1998" name="Genetics">
        <title>The complete nucleotide sequence of a snake (Dinodon semicarinatus) mitochondrial genome with two identical control regions.</title>
        <authorList>
            <person name="Kumazawa Y."/>
            <person name="Ota H."/>
            <person name="Nishida M."/>
            <person name="Ozawa T."/>
        </authorList>
    </citation>
    <scope>NUCLEOTIDE SEQUENCE [GENOMIC DNA]</scope>
    <source>
        <tissue>Liver</tissue>
    </source>
</reference>
<evidence type="ECO:0000250" key="1"/>
<evidence type="ECO:0000250" key="2">
    <source>
        <dbReference type="UniProtKB" id="P00157"/>
    </source>
</evidence>
<evidence type="ECO:0000255" key="3">
    <source>
        <dbReference type="PROSITE-ProRule" id="PRU00967"/>
    </source>
</evidence>
<evidence type="ECO:0000255" key="4">
    <source>
        <dbReference type="PROSITE-ProRule" id="PRU00968"/>
    </source>
</evidence>
<keyword id="KW-0249">Electron transport</keyword>
<keyword id="KW-0349">Heme</keyword>
<keyword id="KW-0408">Iron</keyword>
<keyword id="KW-0472">Membrane</keyword>
<keyword id="KW-0479">Metal-binding</keyword>
<keyword id="KW-0496">Mitochondrion</keyword>
<keyword id="KW-0999">Mitochondrion inner membrane</keyword>
<keyword id="KW-0679">Respiratory chain</keyword>
<keyword id="KW-0812">Transmembrane</keyword>
<keyword id="KW-1133">Transmembrane helix</keyword>
<keyword id="KW-0813">Transport</keyword>
<keyword id="KW-0830">Ubiquinone</keyword>
<comment type="function">
    <text evidence="2">Component of the ubiquinol-cytochrome c reductase complex (complex III or cytochrome b-c1 complex) that is part of the mitochondrial respiratory chain. The b-c1 complex mediates electron transfer from ubiquinol to cytochrome c. Contributes to the generation of a proton gradient across the mitochondrial membrane that is then used for ATP synthesis.</text>
</comment>
<comment type="cofactor">
    <cofactor evidence="2">
        <name>heme b</name>
        <dbReference type="ChEBI" id="CHEBI:60344"/>
    </cofactor>
    <text evidence="2">Binds 2 heme b groups non-covalently.</text>
</comment>
<comment type="subunit">
    <text evidence="2">The cytochrome bc1 complex contains 3 respiratory subunits (MT-CYB, CYC1 and UQCRFS1), 2 core proteins (UQCRC1 and UQCRC2) and probably 6 low-molecular weight proteins.</text>
</comment>
<comment type="subcellular location">
    <subcellularLocation>
        <location evidence="2">Mitochondrion inner membrane</location>
        <topology evidence="2">Multi-pass membrane protein</topology>
    </subcellularLocation>
</comment>
<comment type="miscellaneous">
    <text evidence="1">Heme 1 (or BL or b562) is low-potential and absorbs at about 562 nm, and heme 2 (or BH or b566) is high-potential and absorbs at about 566 nm.</text>
</comment>
<comment type="similarity">
    <text evidence="3 4">Belongs to the cytochrome b family.</text>
</comment>
<comment type="caution">
    <text evidence="2">The full-length protein contains only eight transmembrane helices, not nine as predicted by bioinformatics tools.</text>
</comment>
<organism>
    <name type="scientific">Lycodon semicarinatus</name>
    <name type="common">Ryukyu odd-tooth snake</name>
    <name type="synonym">Eumesodon semicarinatus</name>
    <dbReference type="NCBI Taxonomy" id="56549"/>
    <lineage>
        <taxon>Eukaryota</taxon>
        <taxon>Metazoa</taxon>
        <taxon>Chordata</taxon>
        <taxon>Craniata</taxon>
        <taxon>Vertebrata</taxon>
        <taxon>Euteleostomi</taxon>
        <taxon>Lepidosauria</taxon>
        <taxon>Squamata</taxon>
        <taxon>Bifurcata</taxon>
        <taxon>Unidentata</taxon>
        <taxon>Episquamata</taxon>
        <taxon>Toxicofera</taxon>
        <taxon>Serpentes</taxon>
        <taxon>Colubroidea</taxon>
        <taxon>Colubridae</taxon>
        <taxon>Colubrinae</taxon>
        <taxon>Lycodon</taxon>
    </lineage>
</organism>
<feature type="chain" id="PRO_0000060886" description="Cytochrome b">
    <location>
        <begin position="1"/>
        <end position="372"/>
    </location>
</feature>
<feature type="transmembrane region" description="Helical" evidence="2">
    <location>
        <begin position="25"/>
        <end position="45"/>
    </location>
</feature>
<feature type="transmembrane region" description="Helical" evidence="2">
    <location>
        <begin position="69"/>
        <end position="90"/>
    </location>
</feature>
<feature type="transmembrane region" description="Helical" evidence="2">
    <location>
        <begin position="105"/>
        <end position="125"/>
    </location>
</feature>
<feature type="transmembrane region" description="Helical" evidence="2">
    <location>
        <begin position="170"/>
        <end position="190"/>
    </location>
</feature>
<feature type="transmembrane region" description="Helical" evidence="2">
    <location>
        <begin position="218"/>
        <end position="238"/>
    </location>
</feature>
<feature type="transmembrane region" description="Helical" evidence="2">
    <location>
        <begin position="280"/>
        <end position="300"/>
    </location>
</feature>
<feature type="transmembrane region" description="Helical" evidence="2">
    <location>
        <begin position="312"/>
        <end position="332"/>
    </location>
</feature>
<feature type="transmembrane region" description="Helical" evidence="2">
    <location>
        <begin position="339"/>
        <end position="358"/>
    </location>
</feature>
<feature type="binding site" description="axial binding residue" evidence="2">
    <location>
        <position position="75"/>
    </location>
    <ligand>
        <name>heme b</name>
        <dbReference type="ChEBI" id="CHEBI:60344"/>
        <label>b562</label>
    </ligand>
    <ligandPart>
        <name>Fe</name>
        <dbReference type="ChEBI" id="CHEBI:18248"/>
    </ligandPart>
</feature>
<feature type="binding site" description="axial binding residue" evidence="2">
    <location>
        <position position="89"/>
    </location>
    <ligand>
        <name>heme b</name>
        <dbReference type="ChEBI" id="CHEBI:60344"/>
        <label>b566</label>
    </ligand>
    <ligandPart>
        <name>Fe</name>
        <dbReference type="ChEBI" id="CHEBI:18248"/>
    </ligandPart>
</feature>
<feature type="binding site" description="axial binding residue" evidence="2">
    <location>
        <position position="174"/>
    </location>
    <ligand>
        <name>heme b</name>
        <dbReference type="ChEBI" id="CHEBI:60344"/>
        <label>b562</label>
    </ligand>
    <ligandPart>
        <name>Fe</name>
        <dbReference type="ChEBI" id="CHEBI:18248"/>
    </ligandPart>
</feature>
<feature type="binding site" description="axial binding residue" evidence="2">
    <location>
        <position position="188"/>
    </location>
    <ligand>
        <name>heme b</name>
        <dbReference type="ChEBI" id="CHEBI:60344"/>
        <label>b566</label>
    </ligand>
    <ligandPart>
        <name>Fe</name>
        <dbReference type="ChEBI" id="CHEBI:18248"/>
    </ligandPart>
</feature>
<feature type="binding site" evidence="2">
    <location>
        <position position="193"/>
    </location>
    <ligand>
        <name>a ubiquinone</name>
        <dbReference type="ChEBI" id="CHEBI:16389"/>
    </ligand>
</feature>
<gene>
    <name type="primary">MT-CYB</name>
    <name type="synonym">COB</name>
    <name type="synonym">CYTB</name>
    <name type="synonym">MTCYB</name>
</gene>
<protein>
    <recommendedName>
        <fullName>Cytochrome b</fullName>
    </recommendedName>
    <alternativeName>
        <fullName>Complex III subunit 3</fullName>
    </alternativeName>
    <alternativeName>
        <fullName>Complex III subunit III</fullName>
    </alternativeName>
    <alternativeName>
        <fullName>Cytochrome b-c1 complex subunit 3</fullName>
    </alternativeName>
    <alternativeName>
        <fullName>Ubiquinol-cytochrome-c reductase complex cytochrome b subunit</fullName>
    </alternativeName>
</protein>
<dbReference type="EMBL" id="AB008539">
    <property type="protein sequence ID" value="BAA33034.1"/>
    <property type="molecule type" value="Genomic_DNA"/>
</dbReference>
<dbReference type="PIR" id="T11100">
    <property type="entry name" value="T11100"/>
</dbReference>
<dbReference type="RefSeq" id="NP_008431.1">
    <property type="nucleotide sequence ID" value="NC_001945.1"/>
</dbReference>
<dbReference type="SMR" id="O79558"/>
<dbReference type="GeneID" id="808265"/>
<dbReference type="CTD" id="4519"/>
<dbReference type="GO" id="GO:0005743">
    <property type="term" value="C:mitochondrial inner membrane"/>
    <property type="evidence" value="ECO:0007669"/>
    <property type="project" value="UniProtKB-SubCell"/>
</dbReference>
<dbReference type="GO" id="GO:0045275">
    <property type="term" value="C:respiratory chain complex III"/>
    <property type="evidence" value="ECO:0007669"/>
    <property type="project" value="InterPro"/>
</dbReference>
<dbReference type="GO" id="GO:0046872">
    <property type="term" value="F:metal ion binding"/>
    <property type="evidence" value="ECO:0007669"/>
    <property type="project" value="UniProtKB-KW"/>
</dbReference>
<dbReference type="GO" id="GO:0008121">
    <property type="term" value="F:ubiquinol-cytochrome-c reductase activity"/>
    <property type="evidence" value="ECO:0007669"/>
    <property type="project" value="InterPro"/>
</dbReference>
<dbReference type="GO" id="GO:0006122">
    <property type="term" value="P:mitochondrial electron transport, ubiquinol to cytochrome c"/>
    <property type="evidence" value="ECO:0007669"/>
    <property type="project" value="TreeGrafter"/>
</dbReference>
<dbReference type="CDD" id="cd00290">
    <property type="entry name" value="cytochrome_b_C"/>
    <property type="match status" value="1"/>
</dbReference>
<dbReference type="CDD" id="cd00284">
    <property type="entry name" value="Cytochrome_b_N"/>
    <property type="match status" value="1"/>
</dbReference>
<dbReference type="Gene3D" id="1.20.810.10">
    <property type="entry name" value="Cytochrome Bc1 Complex, Chain C"/>
    <property type="match status" value="1"/>
</dbReference>
<dbReference type="InterPro" id="IPR005798">
    <property type="entry name" value="Cyt_b/b6_C"/>
</dbReference>
<dbReference type="InterPro" id="IPR036150">
    <property type="entry name" value="Cyt_b/b6_C_sf"/>
</dbReference>
<dbReference type="InterPro" id="IPR005797">
    <property type="entry name" value="Cyt_b/b6_N"/>
</dbReference>
<dbReference type="InterPro" id="IPR027387">
    <property type="entry name" value="Cytb/b6-like_sf"/>
</dbReference>
<dbReference type="InterPro" id="IPR030689">
    <property type="entry name" value="Cytochrome_b"/>
</dbReference>
<dbReference type="InterPro" id="IPR048260">
    <property type="entry name" value="Cytochrome_b_C_euk/bac"/>
</dbReference>
<dbReference type="InterPro" id="IPR048259">
    <property type="entry name" value="Cytochrome_b_N_euk/bac"/>
</dbReference>
<dbReference type="InterPro" id="IPR016174">
    <property type="entry name" value="Di-haem_cyt_TM"/>
</dbReference>
<dbReference type="PANTHER" id="PTHR19271">
    <property type="entry name" value="CYTOCHROME B"/>
    <property type="match status" value="1"/>
</dbReference>
<dbReference type="PANTHER" id="PTHR19271:SF16">
    <property type="entry name" value="CYTOCHROME B"/>
    <property type="match status" value="1"/>
</dbReference>
<dbReference type="Pfam" id="PF00032">
    <property type="entry name" value="Cytochrom_B_C"/>
    <property type="match status" value="1"/>
</dbReference>
<dbReference type="Pfam" id="PF00033">
    <property type="entry name" value="Cytochrome_B"/>
    <property type="match status" value="1"/>
</dbReference>
<dbReference type="PIRSF" id="PIRSF038885">
    <property type="entry name" value="COB"/>
    <property type="match status" value="1"/>
</dbReference>
<dbReference type="SUPFAM" id="SSF81648">
    <property type="entry name" value="a domain/subunit of cytochrome bc1 complex (Ubiquinol-cytochrome c reductase)"/>
    <property type="match status" value="1"/>
</dbReference>
<dbReference type="SUPFAM" id="SSF81342">
    <property type="entry name" value="Transmembrane di-heme cytochromes"/>
    <property type="match status" value="1"/>
</dbReference>
<dbReference type="PROSITE" id="PS51003">
    <property type="entry name" value="CYTB_CTER"/>
    <property type="match status" value="1"/>
</dbReference>
<dbReference type="PROSITE" id="PS51002">
    <property type="entry name" value="CYTB_NTER"/>
    <property type="match status" value="1"/>
</dbReference>
<proteinExistence type="inferred from homology"/>
<accession>O79558</accession>
<geneLocation type="mitochondrion"/>
<name>CYB_LYCSM</name>
<sequence>MPNQHMLMLFNMLPVGSNISTWWNFGSMLLTCSALQTITGFFLAIHYTANINLAFSSVIHITRDVPYGWIMQNLHAIGASMFFICIYIHIARGLYYGSYLNKNVWLSGTILLFILMATAFFGYVLPWGQMSFWAATVITNLLTAVPYIGTTLTNWLWGGFSINDPTLTRFFALHFILPFTIISLSSIHIMLLHTEGSSNPLGTNSDIDKIPFHPYHTHKDILVLTIMLTTMFIIMTLTPNIFNYPENFSKANPLVTPQHIKPEWYFLFAYGILRSIPNKLGGTVALVLSVAILLTTPFTHTSHMRSMTFRPLTQLMFWTLVATFITITWAATKPVEPPFTMIGQMTSLLYFSFFIMNPLLGWLENKISFTNT</sequence>